<name>SUCB2_HUMAN</name>
<comment type="function">
    <text evidence="2">GTP-specific succinyl-CoA synthetase functions in the citric acid cycle (TCA), coupling the hydrolysis of succinyl-CoA to the synthesis of GTP and thus represents the only step of substrate-level phosphorylation in the TCA. The beta subunit provides nucleotide specificity of the enzyme and binds the substrate succinate, while the binding sites for coenzyme A and phosphate are found in the alpha subunit.</text>
</comment>
<comment type="catalytic activity">
    <reaction evidence="2">
        <text>GTP + succinate + CoA = succinyl-CoA + GDP + phosphate</text>
        <dbReference type="Rhea" id="RHEA:22120"/>
        <dbReference type="ChEBI" id="CHEBI:30031"/>
        <dbReference type="ChEBI" id="CHEBI:37565"/>
        <dbReference type="ChEBI" id="CHEBI:43474"/>
        <dbReference type="ChEBI" id="CHEBI:57287"/>
        <dbReference type="ChEBI" id="CHEBI:57292"/>
        <dbReference type="ChEBI" id="CHEBI:58189"/>
        <dbReference type="EC" id="6.2.1.4"/>
    </reaction>
</comment>
<comment type="cofactor">
    <cofactor evidence="2">
        <name>Mg(2+)</name>
        <dbReference type="ChEBI" id="CHEBI:18420"/>
    </cofactor>
    <text evidence="2">Binds 1 Mg(2+) ion per subunit.</text>
</comment>
<comment type="pathway">
    <text evidence="2">Carbohydrate metabolism; tricarboxylic acid cycle; succinate from succinyl-CoA (ligase route): step 1/1.</text>
</comment>
<comment type="subunit">
    <text evidence="2">Heterodimer of an alpha and a beta subunit. The beta subunit determines specificity for GTP.</text>
</comment>
<comment type="interaction">
    <interactant intactId="EBI-2511878">
        <id>Q96I99</id>
    </interactant>
    <interactant intactId="EBI-1805738">
        <id>Q8IWL3</id>
        <label>HSCB</label>
    </interactant>
    <organismsDiffer>false</organismsDiffer>
    <experiments>4</experiments>
</comment>
<comment type="interaction">
    <interactant intactId="EBI-2511878">
        <id>Q96I99</id>
    </interactant>
    <interactant intactId="EBI-1237145">
        <id>P53597</id>
        <label>SUCLG1</label>
    </interactant>
    <organismsDiffer>false</organismsDiffer>
    <experiments>3</experiments>
</comment>
<comment type="subcellular location">
    <subcellularLocation>
        <location evidence="2">Mitochondrion</location>
    </subcellularLocation>
</comment>
<comment type="alternative products">
    <event type="alternative splicing"/>
    <isoform>
        <id>Q96I99-1</id>
        <name>1</name>
        <sequence type="displayed"/>
    </isoform>
    <isoform>
        <id>Q96I99-2</id>
        <name>2</name>
        <sequence type="described" ref="VSP_042013"/>
    </isoform>
</comment>
<comment type="tissue specificity">
    <text evidence="3">Mainly expressed in liver, kidney, heart, spleen and skeletal muscle. Also found in intestine and colon, and in low amounts in lung, brain, prostate, testis and ovary.</text>
</comment>
<comment type="similarity">
    <text evidence="2">Belongs to the succinate/malate CoA ligase beta subunit family. GTP-specific subunit beta subfamily.</text>
</comment>
<comment type="sequence caution" evidence="5">
    <conflict type="erroneous initiation">
        <sequence resource="EMBL-CDS" id="AAH07716"/>
    </conflict>
</comment>
<comment type="sequence caution" evidence="5">
    <conflict type="erroneous initiation">
        <sequence resource="EMBL-CDS" id="AAH47024"/>
    </conflict>
    <text>Extended N-terminus.</text>
</comment>
<comment type="sequence caution" evidence="5">
    <conflict type="erroneous termination">
        <sequence resource="EMBL-CDS" id="AAH47024"/>
    </conflict>
    <text>Truncated C-terminus.</text>
</comment>
<dbReference type="EC" id="6.2.1.4" evidence="2"/>
<dbReference type="EMBL" id="AK310527">
    <property type="status" value="NOT_ANNOTATED_CDS"/>
    <property type="molecule type" value="mRNA"/>
</dbReference>
<dbReference type="EMBL" id="AC099783">
    <property type="status" value="NOT_ANNOTATED_CDS"/>
    <property type="molecule type" value="Genomic_DNA"/>
</dbReference>
<dbReference type="EMBL" id="AC112213">
    <property type="status" value="NOT_ANNOTATED_CDS"/>
    <property type="molecule type" value="Genomic_DNA"/>
</dbReference>
<dbReference type="EMBL" id="AC113169">
    <property type="status" value="NOT_ANNOTATED_CDS"/>
    <property type="molecule type" value="Genomic_DNA"/>
</dbReference>
<dbReference type="EMBL" id="AC114401">
    <property type="status" value="NOT_ANNOTATED_CDS"/>
    <property type="molecule type" value="Genomic_DNA"/>
</dbReference>
<dbReference type="EMBL" id="BC007716">
    <property type="protein sequence ID" value="AAH07716.3"/>
    <property type="status" value="ALT_INIT"/>
    <property type="molecule type" value="mRNA"/>
</dbReference>
<dbReference type="EMBL" id="BC019868">
    <property type="protein sequence ID" value="AAH19868.1"/>
    <property type="molecule type" value="mRNA"/>
</dbReference>
<dbReference type="EMBL" id="BC047024">
    <property type="protein sequence ID" value="AAH47024.1"/>
    <property type="status" value="ALT_SEQ"/>
    <property type="molecule type" value="mRNA"/>
</dbReference>
<dbReference type="EMBL" id="BC068602">
    <property type="protein sequence ID" value="AAH68602.1"/>
    <property type="molecule type" value="mRNA"/>
</dbReference>
<dbReference type="EMBL" id="AF058954">
    <property type="protein sequence ID" value="AAC64397.1"/>
    <property type="molecule type" value="mRNA"/>
</dbReference>
<dbReference type="EMBL" id="AF131748">
    <property type="protein sequence ID" value="AAD20032.1"/>
    <property type="molecule type" value="mRNA"/>
</dbReference>
<dbReference type="CCDS" id="CCDS43104.1">
    <molecule id="Q96I99-1"/>
</dbReference>
<dbReference type="CCDS" id="CCDS54605.1">
    <molecule id="Q96I99-2"/>
</dbReference>
<dbReference type="RefSeq" id="NP_001171070.1">
    <molecule id="Q96I99-2"/>
    <property type="nucleotide sequence ID" value="NM_001177599.2"/>
</dbReference>
<dbReference type="RefSeq" id="NP_003839.2">
    <molecule id="Q96I99-1"/>
    <property type="nucleotide sequence ID" value="NM_003848.4"/>
</dbReference>
<dbReference type="PDB" id="6WCV">
    <property type="method" value="X-ray"/>
    <property type="resolution" value="1.52 A"/>
    <property type="chains" value="B=38-432"/>
</dbReference>
<dbReference type="PDB" id="7MSR">
    <property type="method" value="X-ray"/>
    <property type="resolution" value="1.58 A"/>
    <property type="chains" value="B=38-432"/>
</dbReference>
<dbReference type="PDB" id="7MSS">
    <property type="method" value="X-ray"/>
    <property type="resolution" value="1.75 A"/>
    <property type="chains" value="B=38-432"/>
</dbReference>
<dbReference type="PDB" id="7MST">
    <property type="method" value="X-ray"/>
    <property type="resolution" value="1.61 A"/>
    <property type="chains" value="B=38-432"/>
</dbReference>
<dbReference type="PDB" id="8Z02">
    <property type="method" value="X-ray"/>
    <property type="resolution" value="2.32 A"/>
    <property type="chains" value="B=38-432"/>
</dbReference>
<dbReference type="PDB" id="8Z03">
    <property type="method" value="X-ray"/>
    <property type="resolution" value="1.99 A"/>
    <property type="chains" value="B=38-432"/>
</dbReference>
<dbReference type="PDBsum" id="6WCV"/>
<dbReference type="PDBsum" id="7MSR"/>
<dbReference type="PDBsum" id="7MSS"/>
<dbReference type="PDBsum" id="7MST"/>
<dbReference type="PDBsum" id="8Z02"/>
<dbReference type="PDBsum" id="8Z03"/>
<dbReference type="SMR" id="Q96I99"/>
<dbReference type="BioGRID" id="114329">
    <property type="interactions" value="121"/>
</dbReference>
<dbReference type="ComplexPortal" id="CPX-6175">
    <property type="entry name" value="Mitochondrial succinyl-CoA synthetase complex, GTP-specific variant"/>
</dbReference>
<dbReference type="CORUM" id="Q96I99"/>
<dbReference type="DIP" id="DIP-53563N"/>
<dbReference type="FunCoup" id="Q96I99">
    <property type="interactions" value="770"/>
</dbReference>
<dbReference type="IntAct" id="Q96I99">
    <property type="interactions" value="28"/>
</dbReference>
<dbReference type="MINT" id="Q96I99"/>
<dbReference type="STRING" id="9606.ENSP00000419325"/>
<dbReference type="DrugBank" id="DB00787">
    <property type="generic name" value="Acyclovir"/>
</dbReference>
<dbReference type="DrugBank" id="DB12695">
    <property type="generic name" value="Phenethyl Isothiocyanate"/>
</dbReference>
<dbReference type="DrugBank" id="DB00139">
    <property type="generic name" value="Succinic acid"/>
</dbReference>
<dbReference type="GlyGen" id="Q96I99">
    <property type="glycosylation" value="1 site, 1 O-linked glycan (1 site)"/>
</dbReference>
<dbReference type="iPTMnet" id="Q96I99"/>
<dbReference type="MetOSite" id="Q96I99"/>
<dbReference type="PhosphoSitePlus" id="Q96I99"/>
<dbReference type="SwissPalm" id="Q96I99"/>
<dbReference type="BioMuta" id="SUCLG2"/>
<dbReference type="DMDM" id="52788292"/>
<dbReference type="REPRODUCTION-2DPAGE" id="IPI00096066"/>
<dbReference type="CPTAC" id="CPTAC-2776"/>
<dbReference type="jPOST" id="Q96I99"/>
<dbReference type="MassIVE" id="Q96I99"/>
<dbReference type="PaxDb" id="9606-ENSP00000419325"/>
<dbReference type="PeptideAtlas" id="Q96I99"/>
<dbReference type="ProteomicsDB" id="76820">
    <molecule id="Q96I99-1"/>
</dbReference>
<dbReference type="ProteomicsDB" id="76821">
    <molecule id="Q96I99-2"/>
</dbReference>
<dbReference type="Pumba" id="Q96I99"/>
<dbReference type="TopDownProteomics" id="Q96I99-1">
    <molecule id="Q96I99-1"/>
</dbReference>
<dbReference type="TopDownProteomics" id="Q96I99-2">
    <molecule id="Q96I99-2"/>
</dbReference>
<dbReference type="Antibodypedia" id="31838">
    <property type="antibodies" value="124 antibodies from 26 providers"/>
</dbReference>
<dbReference type="DNASU" id="8801"/>
<dbReference type="Ensembl" id="ENST00000307227.10">
    <molecule id="Q96I99-1"/>
    <property type="protein sequence ID" value="ENSP00000307432.5"/>
    <property type="gene ID" value="ENSG00000172340.15"/>
</dbReference>
<dbReference type="Ensembl" id="ENST00000493112.5">
    <molecule id="Q96I99-2"/>
    <property type="protein sequence ID" value="ENSP00000419325.1"/>
    <property type="gene ID" value="ENSG00000172340.15"/>
</dbReference>
<dbReference type="GeneID" id="8801"/>
<dbReference type="KEGG" id="hsa:8801"/>
<dbReference type="MANE-Select" id="ENST00000307227.10">
    <property type="protein sequence ID" value="ENSP00000307432.5"/>
    <property type="RefSeq nucleotide sequence ID" value="NM_003848.4"/>
    <property type="RefSeq protein sequence ID" value="NP_003839.2"/>
</dbReference>
<dbReference type="UCSC" id="uc003dna.5">
    <molecule id="Q96I99-1"/>
    <property type="organism name" value="human"/>
</dbReference>
<dbReference type="AGR" id="HGNC:11450"/>
<dbReference type="CTD" id="8801"/>
<dbReference type="DisGeNET" id="8801"/>
<dbReference type="GeneCards" id="SUCLG2"/>
<dbReference type="HGNC" id="HGNC:11450">
    <property type="gene designation" value="SUCLG2"/>
</dbReference>
<dbReference type="HPA" id="ENSG00000172340">
    <property type="expression patterns" value="Tissue enhanced (liver)"/>
</dbReference>
<dbReference type="MalaCards" id="SUCLG2"/>
<dbReference type="MIM" id="603922">
    <property type="type" value="gene"/>
</dbReference>
<dbReference type="neXtProt" id="NX_Q96I99"/>
<dbReference type="OpenTargets" id="ENSG00000172340"/>
<dbReference type="PharmGKB" id="PA36247"/>
<dbReference type="VEuPathDB" id="HostDB:ENSG00000172340"/>
<dbReference type="eggNOG" id="KOG1447">
    <property type="taxonomic scope" value="Eukaryota"/>
</dbReference>
<dbReference type="GeneTree" id="ENSGT00390000010170"/>
<dbReference type="HOGENOM" id="CLU_037430_0_2_1"/>
<dbReference type="InParanoid" id="Q96I99"/>
<dbReference type="OMA" id="KQMIGNR"/>
<dbReference type="OrthoDB" id="1552at2759"/>
<dbReference type="PAN-GO" id="Q96I99">
    <property type="GO annotations" value="5 GO annotations based on evolutionary models"/>
</dbReference>
<dbReference type="PhylomeDB" id="Q96I99"/>
<dbReference type="TreeFam" id="TF300624"/>
<dbReference type="BioCyc" id="MetaCyc:HS10493-MONOMER"/>
<dbReference type="BRENDA" id="6.2.1.4">
    <property type="organism ID" value="2681"/>
</dbReference>
<dbReference type="PathwayCommons" id="Q96I99"/>
<dbReference type="Reactome" id="R-HSA-71403">
    <property type="pathway name" value="Citric acid cycle (TCA cycle)"/>
</dbReference>
<dbReference type="Reactome" id="R-HSA-9837999">
    <property type="pathway name" value="Mitochondrial protein degradation"/>
</dbReference>
<dbReference type="SignaLink" id="Q96I99"/>
<dbReference type="SIGNOR" id="Q96I99"/>
<dbReference type="UniPathway" id="UPA00223">
    <property type="reaction ID" value="UER00999"/>
</dbReference>
<dbReference type="BioGRID-ORCS" id="8801">
    <property type="hits" value="8 hits in 1160 CRISPR screens"/>
</dbReference>
<dbReference type="CD-CODE" id="5965E019">
    <property type="entry name" value="mtRNA granule"/>
</dbReference>
<dbReference type="ChiTaRS" id="SUCLG2">
    <property type="organism name" value="human"/>
</dbReference>
<dbReference type="GenomeRNAi" id="8801"/>
<dbReference type="Pharos" id="Q96I99">
    <property type="development level" value="Tbio"/>
</dbReference>
<dbReference type="PRO" id="PR:Q96I99"/>
<dbReference type="Proteomes" id="UP000005640">
    <property type="component" value="Chromosome 3"/>
</dbReference>
<dbReference type="RNAct" id="Q96I99">
    <property type="molecule type" value="protein"/>
</dbReference>
<dbReference type="Bgee" id="ENSG00000172340">
    <property type="expression patterns" value="Expressed in colonic mucosa and 201 other cell types or tissues"/>
</dbReference>
<dbReference type="ExpressionAtlas" id="Q96I99">
    <property type="expression patterns" value="baseline and differential"/>
</dbReference>
<dbReference type="GO" id="GO:0005759">
    <property type="term" value="C:mitochondrial matrix"/>
    <property type="evidence" value="ECO:0000304"/>
    <property type="project" value="Reactome"/>
</dbReference>
<dbReference type="GO" id="GO:0005739">
    <property type="term" value="C:mitochondrion"/>
    <property type="evidence" value="ECO:0000314"/>
    <property type="project" value="HPA"/>
</dbReference>
<dbReference type="GO" id="GO:0005886">
    <property type="term" value="C:plasma membrane"/>
    <property type="evidence" value="ECO:0000314"/>
    <property type="project" value="HPA"/>
</dbReference>
<dbReference type="GO" id="GO:0042709">
    <property type="term" value="C:succinate-CoA ligase complex"/>
    <property type="evidence" value="ECO:0000318"/>
    <property type="project" value="GO_Central"/>
</dbReference>
<dbReference type="GO" id="GO:0045244">
    <property type="term" value="C:succinate-CoA ligase complex (GDP-forming)"/>
    <property type="evidence" value="ECO:0000353"/>
    <property type="project" value="ComplexPortal"/>
</dbReference>
<dbReference type="GO" id="GO:0005524">
    <property type="term" value="F:ATP binding"/>
    <property type="evidence" value="ECO:0007669"/>
    <property type="project" value="InterPro"/>
</dbReference>
<dbReference type="GO" id="GO:0019003">
    <property type="term" value="F:GDP binding"/>
    <property type="evidence" value="ECO:0007669"/>
    <property type="project" value="Ensembl"/>
</dbReference>
<dbReference type="GO" id="GO:0005525">
    <property type="term" value="F:GTP binding"/>
    <property type="evidence" value="ECO:0007669"/>
    <property type="project" value="UniProtKB-UniRule"/>
</dbReference>
<dbReference type="GO" id="GO:0000287">
    <property type="term" value="F:magnesium ion binding"/>
    <property type="evidence" value="ECO:0007669"/>
    <property type="project" value="UniProtKB-UniRule"/>
</dbReference>
<dbReference type="GO" id="GO:0044877">
    <property type="term" value="F:protein-containing complex binding"/>
    <property type="evidence" value="ECO:0007669"/>
    <property type="project" value="Ensembl"/>
</dbReference>
<dbReference type="GO" id="GO:0004776">
    <property type="term" value="F:succinate-CoA ligase (GDP-forming) activity"/>
    <property type="evidence" value="ECO:0000318"/>
    <property type="project" value="GO_Central"/>
</dbReference>
<dbReference type="GO" id="GO:0006105">
    <property type="term" value="P:succinate metabolic process"/>
    <property type="evidence" value="ECO:0007669"/>
    <property type="project" value="Ensembl"/>
</dbReference>
<dbReference type="GO" id="GO:1901289">
    <property type="term" value="P:succinyl-CoA catabolic process"/>
    <property type="evidence" value="ECO:0000303"/>
    <property type="project" value="ComplexPortal"/>
</dbReference>
<dbReference type="GO" id="GO:0006104">
    <property type="term" value="P:succinyl-CoA metabolic process"/>
    <property type="evidence" value="ECO:0000318"/>
    <property type="project" value="GO_Central"/>
</dbReference>
<dbReference type="GO" id="GO:0006099">
    <property type="term" value="P:tricarboxylic acid cycle"/>
    <property type="evidence" value="ECO:0000318"/>
    <property type="project" value="GO_Central"/>
</dbReference>
<dbReference type="FunFam" id="3.30.470.20:FF:000002">
    <property type="entry name" value="Succinate--CoA ligase [ADP-forming] subunit beta"/>
    <property type="match status" value="1"/>
</dbReference>
<dbReference type="FunFam" id="3.40.50.261:FF:000001">
    <property type="entry name" value="Succinate--CoA ligase [ADP-forming] subunit beta"/>
    <property type="match status" value="1"/>
</dbReference>
<dbReference type="FunFam" id="3.30.1490.20:FF:000004">
    <property type="entry name" value="Succinate--CoA ligase [ADP-forming] subunit beta, mitochondrial"/>
    <property type="match status" value="1"/>
</dbReference>
<dbReference type="Gene3D" id="3.30.1490.20">
    <property type="entry name" value="ATP-grasp fold, A domain"/>
    <property type="match status" value="1"/>
</dbReference>
<dbReference type="Gene3D" id="3.30.470.20">
    <property type="entry name" value="ATP-grasp fold, B domain"/>
    <property type="match status" value="1"/>
</dbReference>
<dbReference type="Gene3D" id="3.40.50.261">
    <property type="entry name" value="Succinyl-CoA synthetase domains"/>
    <property type="match status" value="1"/>
</dbReference>
<dbReference type="HAMAP" id="MF_00558">
    <property type="entry name" value="Succ_CoA_beta"/>
    <property type="match status" value="1"/>
</dbReference>
<dbReference type="HAMAP" id="MF_03221">
    <property type="entry name" value="Succ_CoA_betaG_euk"/>
    <property type="match status" value="1"/>
</dbReference>
<dbReference type="InterPro" id="IPR013650">
    <property type="entry name" value="ATP-grasp_succ-CoA_synth-type"/>
</dbReference>
<dbReference type="InterPro" id="IPR013815">
    <property type="entry name" value="ATP_grasp_subdomain_1"/>
</dbReference>
<dbReference type="InterPro" id="IPR017866">
    <property type="entry name" value="Succ-CoA_synthase_bsu_CS"/>
</dbReference>
<dbReference type="InterPro" id="IPR005811">
    <property type="entry name" value="SUCC_ACL_C"/>
</dbReference>
<dbReference type="InterPro" id="IPR034722">
    <property type="entry name" value="Succ_CoA_betaG_euk"/>
</dbReference>
<dbReference type="InterPro" id="IPR005809">
    <property type="entry name" value="Succ_CoA_ligase-like_bsu"/>
</dbReference>
<dbReference type="InterPro" id="IPR016102">
    <property type="entry name" value="Succinyl-CoA_synth-like"/>
</dbReference>
<dbReference type="NCBIfam" id="NF001913">
    <property type="entry name" value="PRK00696.1"/>
    <property type="match status" value="1"/>
</dbReference>
<dbReference type="NCBIfam" id="TIGR01016">
    <property type="entry name" value="sucCoAbeta"/>
    <property type="match status" value="1"/>
</dbReference>
<dbReference type="PANTHER" id="PTHR11815:SF10">
    <property type="entry name" value="SUCCINATE--COA LIGASE [GDP-FORMING] SUBUNIT BETA, MITOCHONDRIAL"/>
    <property type="match status" value="1"/>
</dbReference>
<dbReference type="PANTHER" id="PTHR11815">
    <property type="entry name" value="SUCCINYL-COA SYNTHETASE BETA CHAIN"/>
    <property type="match status" value="1"/>
</dbReference>
<dbReference type="Pfam" id="PF08442">
    <property type="entry name" value="ATP-grasp_2"/>
    <property type="match status" value="1"/>
</dbReference>
<dbReference type="Pfam" id="PF00549">
    <property type="entry name" value="Ligase_CoA"/>
    <property type="match status" value="1"/>
</dbReference>
<dbReference type="PIRSF" id="PIRSF001554">
    <property type="entry name" value="SucCS_beta"/>
    <property type="match status" value="1"/>
</dbReference>
<dbReference type="SUPFAM" id="SSF56059">
    <property type="entry name" value="Glutathione synthetase ATP-binding domain-like"/>
    <property type="match status" value="1"/>
</dbReference>
<dbReference type="SUPFAM" id="SSF52210">
    <property type="entry name" value="Succinyl-CoA synthetase domains"/>
    <property type="match status" value="1"/>
</dbReference>
<dbReference type="PROSITE" id="PS01217">
    <property type="entry name" value="SUCCINYL_COA_LIG_3"/>
    <property type="match status" value="1"/>
</dbReference>
<feature type="transit peptide" description="Mitochondrion" evidence="7">
    <location>
        <begin position="1"/>
        <end position="37"/>
    </location>
</feature>
<feature type="chain" id="PRO_0000033356" description="Succinate--CoA ligase [GDP-forming] subunit beta, mitochondrial">
    <location>
        <begin position="38"/>
        <end position="432"/>
    </location>
</feature>
<feature type="domain" description="ATP-grasp" evidence="2">
    <location>
        <begin position="46"/>
        <end position="274"/>
    </location>
</feature>
<feature type="binding site" evidence="2">
    <location>
        <position position="57"/>
    </location>
    <ligand>
        <name>GTP</name>
        <dbReference type="ChEBI" id="CHEBI:37565"/>
    </ligand>
</feature>
<feature type="binding site" evidence="2">
    <location>
        <begin position="90"/>
        <end position="92"/>
    </location>
    <ligand>
        <name>GTP</name>
        <dbReference type="ChEBI" id="CHEBI:37565"/>
    </ligand>
</feature>
<feature type="binding site" evidence="2">
    <location>
        <position position="146"/>
    </location>
    <ligand>
        <name>GTP</name>
        <dbReference type="ChEBI" id="CHEBI:37565"/>
    </ligand>
</feature>
<feature type="binding site" evidence="2">
    <location>
        <position position="243"/>
    </location>
    <ligand>
        <name>Mg(2+)</name>
        <dbReference type="ChEBI" id="CHEBI:18420"/>
    </ligand>
</feature>
<feature type="binding site" evidence="2">
    <location>
        <position position="257"/>
    </location>
    <ligand>
        <name>Mg(2+)</name>
        <dbReference type="ChEBI" id="CHEBI:18420"/>
    </ligand>
</feature>
<feature type="binding site" evidence="2">
    <location>
        <position position="308"/>
    </location>
    <ligand>
        <name>substrate</name>
        <note>ligand shared with subunit alpha</note>
    </ligand>
</feature>
<feature type="binding site" evidence="2">
    <location>
        <begin position="365"/>
        <end position="367"/>
    </location>
    <ligand>
        <name>substrate</name>
        <note>ligand shared with subunit alpha</note>
    </ligand>
</feature>
<feature type="site" description="Important for substrate specificity" evidence="2">
    <location>
        <position position="79"/>
    </location>
</feature>
<feature type="site" description="Important for substrate specificity" evidence="2">
    <location>
        <position position="147"/>
    </location>
</feature>
<feature type="modified residue" description="N6-acetyllysine" evidence="1">
    <location>
        <position position="73"/>
    </location>
</feature>
<feature type="modified residue" description="N6-succinyllysine" evidence="1">
    <location>
        <position position="78"/>
    </location>
</feature>
<feature type="modified residue" description="N6-acetyllysine" evidence="1">
    <location>
        <position position="132"/>
    </location>
</feature>
<feature type="modified residue" description="N6-acetyllysine" evidence="1">
    <location>
        <position position="139"/>
    </location>
</feature>
<feature type="modified residue" description="Phosphoserine" evidence="1">
    <location>
        <position position="161"/>
    </location>
</feature>
<feature type="modified residue" description="N6-acetyllysine" evidence="1">
    <location>
        <position position="200"/>
    </location>
</feature>
<feature type="modified residue" description="N6-acetyllysine" evidence="1">
    <location>
        <position position="218"/>
    </location>
</feature>
<feature type="modified residue" description="N6-acetyllysine" evidence="6">
    <location>
        <position position="227"/>
    </location>
</feature>
<feature type="modified residue" description="N6-acetyllysine" evidence="1">
    <location>
        <position position="271"/>
    </location>
</feature>
<feature type="modified residue" description="N6-acetyllysine" evidence="6">
    <location>
        <position position="291"/>
    </location>
</feature>
<feature type="modified residue" description="N6-succinyllysine" evidence="1">
    <location>
        <position position="338"/>
    </location>
</feature>
<feature type="modified residue" description="N6-acetyllysine" evidence="1">
    <location>
        <position position="347"/>
    </location>
</feature>
<feature type="modified residue" description="N6-acetyllysine" evidence="1">
    <location>
        <position position="386"/>
    </location>
</feature>
<feature type="modified residue" description="N6-acetyllysine" evidence="1">
    <location>
        <position position="423"/>
    </location>
</feature>
<feature type="splice variant" id="VSP_042013" description="In isoform 2." evidence="4">
    <original>NVQEAQKILNNSGLPITSAIDLEDAAKKAVASVAKK</original>
    <variation>FMEKKGSYMHIKQETGNSNENITGIQENVAHQNLSKCAISIFLC</variation>
    <location>
        <begin position="397"/>
        <end position="432"/>
    </location>
</feature>
<feature type="sequence variant" id="VAR_052499" description="In dbSNP:rs9843840.">
    <original>K</original>
    <variation>R</variation>
    <location>
        <position position="347"/>
    </location>
</feature>
<feature type="sequence variant" id="VAR_052500" description="In dbSNP:rs7623258.">
    <original>R</original>
    <variation>W</variation>
    <location>
        <position position="381"/>
    </location>
</feature>
<feature type="sequence conflict" description="In Ref. 4; AAC64397." evidence="5" ref="4">
    <original>GV</original>
    <variation>RS</variation>
    <location>
        <begin position="174"/>
        <end position="175"/>
    </location>
</feature>
<feature type="sequence conflict" description="In Ref. 3; AAH68602." evidence="5" ref="3">
    <original>Q</original>
    <variation>K</variation>
    <location>
        <position position="220"/>
    </location>
</feature>
<feature type="helix" evidence="8">
    <location>
        <begin position="42"/>
        <end position="50"/>
    </location>
</feature>
<feature type="turn" evidence="8">
    <location>
        <begin position="51"/>
        <end position="53"/>
    </location>
</feature>
<feature type="strand" evidence="8">
    <location>
        <begin position="59"/>
        <end position="64"/>
    </location>
</feature>
<feature type="helix" evidence="8">
    <location>
        <begin position="65"/>
        <end position="75"/>
    </location>
</feature>
<feature type="strand" evidence="8">
    <location>
        <begin position="78"/>
        <end position="84"/>
    </location>
</feature>
<feature type="strand" evidence="8">
    <location>
        <begin position="87"/>
        <end position="89"/>
    </location>
</feature>
<feature type="helix" evidence="8">
    <location>
        <begin position="91"/>
        <end position="93"/>
    </location>
</feature>
<feature type="strand" evidence="8">
    <location>
        <begin position="103"/>
        <end position="108"/>
    </location>
</feature>
<feature type="helix" evidence="8">
    <location>
        <begin position="110"/>
        <end position="118"/>
    </location>
</feature>
<feature type="turn" evidence="8">
    <location>
        <begin position="119"/>
        <end position="122"/>
    </location>
</feature>
<feature type="strand" evidence="8">
    <location>
        <begin position="123"/>
        <end position="126"/>
    </location>
</feature>
<feature type="strand" evidence="8">
    <location>
        <begin position="140"/>
        <end position="144"/>
    </location>
</feature>
<feature type="strand" evidence="8">
    <location>
        <begin position="149"/>
        <end position="159"/>
    </location>
</feature>
<feature type="turn" evidence="8">
    <location>
        <begin position="160"/>
        <end position="163"/>
    </location>
</feature>
<feature type="strand" evidence="8">
    <location>
        <begin position="164"/>
        <end position="171"/>
    </location>
</feature>
<feature type="helix" evidence="8">
    <location>
        <begin position="177"/>
        <end position="183"/>
    </location>
</feature>
<feature type="helix" evidence="8">
    <location>
        <begin position="185"/>
        <end position="187"/>
    </location>
</feature>
<feature type="strand" evidence="8">
    <location>
        <begin position="189"/>
        <end position="192"/>
    </location>
</feature>
<feature type="turn" evidence="8">
    <location>
        <begin position="195"/>
        <end position="197"/>
    </location>
</feature>
<feature type="helix" evidence="8">
    <location>
        <begin position="201"/>
        <end position="210"/>
    </location>
</feature>
<feature type="helix" evidence="8">
    <location>
        <begin position="216"/>
        <end position="234"/>
    </location>
</feature>
<feature type="strand" evidence="8">
    <location>
        <begin position="237"/>
        <end position="247"/>
    </location>
</feature>
<feature type="strand" evidence="8">
    <location>
        <begin position="253"/>
        <end position="255"/>
    </location>
</feature>
<feature type="strand" evidence="8">
    <location>
        <begin position="258"/>
        <end position="262"/>
    </location>
</feature>
<feature type="helix" evidence="8">
    <location>
        <begin position="264"/>
        <end position="269"/>
    </location>
</feature>
<feature type="helix" evidence="8">
    <location>
        <begin position="271"/>
        <end position="275"/>
    </location>
</feature>
<feature type="helix" evidence="9">
    <location>
        <begin position="279"/>
        <end position="281"/>
    </location>
</feature>
<feature type="helix" evidence="8">
    <location>
        <begin position="284"/>
        <end position="291"/>
    </location>
</feature>
<feature type="strand" evidence="8">
    <location>
        <begin position="295"/>
        <end position="298"/>
    </location>
</feature>
<feature type="strand" evidence="8">
    <location>
        <begin position="300"/>
        <end position="309"/>
    </location>
</feature>
<feature type="helix" evidence="8">
    <location>
        <begin position="310"/>
        <end position="322"/>
    </location>
</feature>
<feature type="strand" evidence="8">
    <location>
        <begin position="329"/>
        <end position="332"/>
    </location>
</feature>
<feature type="helix" evidence="8">
    <location>
        <begin position="339"/>
        <end position="349"/>
    </location>
</feature>
<feature type="strand" evidence="8">
    <location>
        <begin position="357"/>
        <end position="363"/>
    </location>
</feature>
<feature type="helix" evidence="8">
    <location>
        <begin position="369"/>
        <end position="382"/>
    </location>
</feature>
<feature type="strand" evidence="8">
    <location>
        <begin position="389"/>
        <end position="397"/>
    </location>
</feature>
<feature type="helix" evidence="8">
    <location>
        <begin position="398"/>
        <end position="406"/>
    </location>
</feature>
<feature type="strand" evidence="8">
    <location>
        <begin position="408"/>
        <end position="417"/>
    </location>
</feature>
<feature type="helix" evidence="8">
    <location>
        <begin position="418"/>
        <end position="427"/>
    </location>
</feature>
<gene>
    <name evidence="2" type="primary">SUCLG2</name>
</gene>
<accession>Q96I99</accession>
<accession>C9JVT2</accession>
<accession>O95195</accession>
<accession>Q6NUH7</accession>
<accession>Q86VX8</accession>
<accession>Q8WUQ1</accession>
<evidence type="ECO:0000250" key="1">
    <source>
        <dbReference type="UniProtKB" id="Q9Z2I8"/>
    </source>
</evidence>
<evidence type="ECO:0000255" key="2">
    <source>
        <dbReference type="HAMAP-Rule" id="MF_03221"/>
    </source>
</evidence>
<evidence type="ECO:0000269" key="3">
    <source>
    </source>
</evidence>
<evidence type="ECO:0000303" key="4">
    <source>
    </source>
</evidence>
<evidence type="ECO:0000305" key="5"/>
<evidence type="ECO:0007744" key="6">
    <source>
    </source>
</evidence>
<evidence type="ECO:0007744" key="7">
    <source>
    </source>
</evidence>
<evidence type="ECO:0007829" key="8">
    <source>
        <dbReference type="PDB" id="6WCV"/>
    </source>
</evidence>
<evidence type="ECO:0007829" key="9">
    <source>
        <dbReference type="PDB" id="8Z02"/>
    </source>
</evidence>
<proteinExistence type="evidence at protein level"/>
<keyword id="KW-0002">3D-structure</keyword>
<keyword id="KW-0007">Acetylation</keyword>
<keyword id="KW-0025">Alternative splicing</keyword>
<keyword id="KW-0342">GTP-binding</keyword>
<keyword id="KW-0436">Ligase</keyword>
<keyword id="KW-0460">Magnesium</keyword>
<keyword id="KW-0479">Metal-binding</keyword>
<keyword id="KW-0496">Mitochondrion</keyword>
<keyword id="KW-0547">Nucleotide-binding</keyword>
<keyword id="KW-0597">Phosphoprotein</keyword>
<keyword id="KW-1267">Proteomics identification</keyword>
<keyword id="KW-1185">Reference proteome</keyword>
<keyword id="KW-0809">Transit peptide</keyword>
<keyword id="KW-0816">Tricarboxylic acid cycle</keyword>
<organism>
    <name type="scientific">Homo sapiens</name>
    <name type="common">Human</name>
    <dbReference type="NCBI Taxonomy" id="9606"/>
    <lineage>
        <taxon>Eukaryota</taxon>
        <taxon>Metazoa</taxon>
        <taxon>Chordata</taxon>
        <taxon>Craniata</taxon>
        <taxon>Vertebrata</taxon>
        <taxon>Euteleostomi</taxon>
        <taxon>Mammalia</taxon>
        <taxon>Eutheria</taxon>
        <taxon>Euarchontoglires</taxon>
        <taxon>Primates</taxon>
        <taxon>Haplorrhini</taxon>
        <taxon>Catarrhini</taxon>
        <taxon>Hominidae</taxon>
        <taxon>Homo</taxon>
    </lineage>
</organism>
<reference key="1">
    <citation type="journal article" date="2004" name="Nat. Genet.">
        <title>Complete sequencing and characterization of 21,243 full-length human cDNAs.</title>
        <authorList>
            <person name="Ota T."/>
            <person name="Suzuki Y."/>
            <person name="Nishikawa T."/>
            <person name="Otsuki T."/>
            <person name="Sugiyama T."/>
            <person name="Irie R."/>
            <person name="Wakamatsu A."/>
            <person name="Hayashi K."/>
            <person name="Sato H."/>
            <person name="Nagai K."/>
            <person name="Kimura K."/>
            <person name="Makita H."/>
            <person name="Sekine M."/>
            <person name="Obayashi M."/>
            <person name="Nishi T."/>
            <person name="Shibahara T."/>
            <person name="Tanaka T."/>
            <person name="Ishii S."/>
            <person name="Yamamoto J."/>
            <person name="Saito K."/>
            <person name="Kawai Y."/>
            <person name="Isono Y."/>
            <person name="Nakamura Y."/>
            <person name="Nagahari K."/>
            <person name="Murakami K."/>
            <person name="Yasuda T."/>
            <person name="Iwayanagi T."/>
            <person name="Wagatsuma M."/>
            <person name="Shiratori A."/>
            <person name="Sudo H."/>
            <person name="Hosoiri T."/>
            <person name="Kaku Y."/>
            <person name="Kodaira H."/>
            <person name="Kondo H."/>
            <person name="Sugawara M."/>
            <person name="Takahashi M."/>
            <person name="Kanda K."/>
            <person name="Yokoi T."/>
            <person name="Furuya T."/>
            <person name="Kikkawa E."/>
            <person name="Omura Y."/>
            <person name="Abe K."/>
            <person name="Kamihara K."/>
            <person name="Katsuta N."/>
            <person name="Sato K."/>
            <person name="Tanikawa M."/>
            <person name="Yamazaki M."/>
            <person name="Ninomiya K."/>
            <person name="Ishibashi T."/>
            <person name="Yamashita H."/>
            <person name="Murakawa K."/>
            <person name="Fujimori K."/>
            <person name="Tanai H."/>
            <person name="Kimata M."/>
            <person name="Watanabe M."/>
            <person name="Hiraoka S."/>
            <person name="Chiba Y."/>
            <person name="Ishida S."/>
            <person name="Ono Y."/>
            <person name="Takiguchi S."/>
            <person name="Watanabe S."/>
            <person name="Yosida M."/>
            <person name="Hotuta T."/>
            <person name="Kusano J."/>
            <person name="Kanehori K."/>
            <person name="Takahashi-Fujii A."/>
            <person name="Hara H."/>
            <person name="Tanase T.-O."/>
            <person name="Nomura Y."/>
            <person name="Togiya S."/>
            <person name="Komai F."/>
            <person name="Hara R."/>
            <person name="Takeuchi K."/>
            <person name="Arita M."/>
            <person name="Imose N."/>
            <person name="Musashino K."/>
            <person name="Yuuki H."/>
            <person name="Oshima A."/>
            <person name="Sasaki N."/>
            <person name="Aotsuka S."/>
            <person name="Yoshikawa Y."/>
            <person name="Matsunawa H."/>
            <person name="Ichihara T."/>
            <person name="Shiohata N."/>
            <person name="Sano S."/>
            <person name="Moriya S."/>
            <person name="Momiyama H."/>
            <person name="Satoh N."/>
            <person name="Takami S."/>
            <person name="Terashima Y."/>
            <person name="Suzuki O."/>
            <person name="Nakagawa S."/>
            <person name="Senoh A."/>
            <person name="Mizoguchi H."/>
            <person name="Goto Y."/>
            <person name="Shimizu F."/>
            <person name="Wakebe H."/>
            <person name="Hishigaki H."/>
            <person name="Watanabe T."/>
            <person name="Sugiyama A."/>
            <person name="Takemoto M."/>
            <person name="Kawakami B."/>
            <person name="Yamazaki M."/>
            <person name="Watanabe K."/>
            <person name="Kumagai A."/>
            <person name="Itakura S."/>
            <person name="Fukuzumi Y."/>
            <person name="Fujimori Y."/>
            <person name="Komiyama M."/>
            <person name="Tashiro H."/>
            <person name="Tanigami A."/>
            <person name="Fujiwara T."/>
            <person name="Ono T."/>
            <person name="Yamada K."/>
            <person name="Fujii Y."/>
            <person name="Ozaki K."/>
            <person name="Hirao M."/>
            <person name="Ohmori Y."/>
            <person name="Kawabata A."/>
            <person name="Hikiji T."/>
            <person name="Kobatake N."/>
            <person name="Inagaki H."/>
            <person name="Ikema Y."/>
            <person name="Okamoto S."/>
            <person name="Okitani R."/>
            <person name="Kawakami T."/>
            <person name="Noguchi S."/>
            <person name="Itoh T."/>
            <person name="Shigeta K."/>
            <person name="Senba T."/>
            <person name="Matsumura K."/>
            <person name="Nakajima Y."/>
            <person name="Mizuno T."/>
            <person name="Morinaga M."/>
            <person name="Sasaki M."/>
            <person name="Togashi T."/>
            <person name="Oyama M."/>
            <person name="Hata H."/>
            <person name="Watanabe M."/>
            <person name="Komatsu T."/>
            <person name="Mizushima-Sugano J."/>
            <person name="Satoh T."/>
            <person name="Shirai Y."/>
            <person name="Takahashi Y."/>
            <person name="Nakagawa K."/>
            <person name="Okumura K."/>
            <person name="Nagase T."/>
            <person name="Nomura N."/>
            <person name="Kikuchi H."/>
            <person name="Masuho Y."/>
            <person name="Yamashita R."/>
            <person name="Nakai K."/>
            <person name="Yada T."/>
            <person name="Nakamura Y."/>
            <person name="Ohara O."/>
            <person name="Isogai T."/>
            <person name="Sugano S."/>
        </authorList>
    </citation>
    <scope>NUCLEOTIDE SEQUENCE [LARGE SCALE MRNA] (ISOFORM 2)</scope>
    <source>
        <tissue>Testis</tissue>
    </source>
</reference>
<reference key="2">
    <citation type="journal article" date="2006" name="Nature">
        <title>The DNA sequence, annotation and analysis of human chromosome 3.</title>
        <authorList>
            <person name="Muzny D.M."/>
            <person name="Scherer S.E."/>
            <person name="Kaul R."/>
            <person name="Wang J."/>
            <person name="Yu J."/>
            <person name="Sudbrak R."/>
            <person name="Buhay C.J."/>
            <person name="Chen R."/>
            <person name="Cree A."/>
            <person name="Ding Y."/>
            <person name="Dugan-Rocha S."/>
            <person name="Gill R."/>
            <person name="Gunaratne P."/>
            <person name="Harris R.A."/>
            <person name="Hawes A.C."/>
            <person name="Hernandez J."/>
            <person name="Hodgson A.V."/>
            <person name="Hume J."/>
            <person name="Jackson A."/>
            <person name="Khan Z.M."/>
            <person name="Kovar-Smith C."/>
            <person name="Lewis L.R."/>
            <person name="Lozado R.J."/>
            <person name="Metzker M.L."/>
            <person name="Milosavljevic A."/>
            <person name="Miner G.R."/>
            <person name="Morgan M.B."/>
            <person name="Nazareth L.V."/>
            <person name="Scott G."/>
            <person name="Sodergren E."/>
            <person name="Song X.-Z."/>
            <person name="Steffen D."/>
            <person name="Wei S."/>
            <person name="Wheeler D.A."/>
            <person name="Wright M.W."/>
            <person name="Worley K.C."/>
            <person name="Yuan Y."/>
            <person name="Zhang Z."/>
            <person name="Adams C.Q."/>
            <person name="Ansari-Lari M.A."/>
            <person name="Ayele M."/>
            <person name="Brown M.J."/>
            <person name="Chen G."/>
            <person name="Chen Z."/>
            <person name="Clendenning J."/>
            <person name="Clerc-Blankenburg K.P."/>
            <person name="Chen R."/>
            <person name="Chen Z."/>
            <person name="Davis C."/>
            <person name="Delgado O."/>
            <person name="Dinh H.H."/>
            <person name="Dong W."/>
            <person name="Draper H."/>
            <person name="Ernst S."/>
            <person name="Fu G."/>
            <person name="Gonzalez-Garay M.L."/>
            <person name="Garcia D.K."/>
            <person name="Gillett W."/>
            <person name="Gu J."/>
            <person name="Hao B."/>
            <person name="Haugen E."/>
            <person name="Havlak P."/>
            <person name="He X."/>
            <person name="Hennig S."/>
            <person name="Hu S."/>
            <person name="Huang W."/>
            <person name="Jackson L.R."/>
            <person name="Jacob L.S."/>
            <person name="Kelly S.H."/>
            <person name="Kube M."/>
            <person name="Levy R."/>
            <person name="Li Z."/>
            <person name="Liu B."/>
            <person name="Liu J."/>
            <person name="Liu W."/>
            <person name="Lu J."/>
            <person name="Maheshwari M."/>
            <person name="Nguyen B.-V."/>
            <person name="Okwuonu G.O."/>
            <person name="Palmeiri A."/>
            <person name="Pasternak S."/>
            <person name="Perez L.M."/>
            <person name="Phelps K.A."/>
            <person name="Plopper F.J."/>
            <person name="Qiang B."/>
            <person name="Raymond C."/>
            <person name="Rodriguez R."/>
            <person name="Saenphimmachak C."/>
            <person name="Santibanez J."/>
            <person name="Shen H."/>
            <person name="Shen Y."/>
            <person name="Subramanian S."/>
            <person name="Tabor P.E."/>
            <person name="Verduzco D."/>
            <person name="Waldron L."/>
            <person name="Wang J."/>
            <person name="Wang J."/>
            <person name="Wang Q."/>
            <person name="Williams G.A."/>
            <person name="Wong G.K.-S."/>
            <person name="Yao Z."/>
            <person name="Zhang J."/>
            <person name="Zhang X."/>
            <person name="Zhao G."/>
            <person name="Zhou J."/>
            <person name="Zhou Y."/>
            <person name="Nelson D."/>
            <person name="Lehrach H."/>
            <person name="Reinhardt R."/>
            <person name="Naylor S.L."/>
            <person name="Yang H."/>
            <person name="Olson M."/>
            <person name="Weinstock G."/>
            <person name="Gibbs R.A."/>
        </authorList>
    </citation>
    <scope>NUCLEOTIDE SEQUENCE [LARGE SCALE GENOMIC DNA]</scope>
</reference>
<reference key="3">
    <citation type="journal article" date="2004" name="Genome Res.">
        <title>The status, quality, and expansion of the NIH full-length cDNA project: the Mammalian Gene Collection (MGC).</title>
        <authorList>
            <consortium name="The MGC Project Team"/>
        </authorList>
    </citation>
    <scope>NUCLEOTIDE SEQUENCE [LARGE SCALE MRNA] (ISOFORM 1)</scope>
    <source>
        <tissue>Hippocampus</tissue>
        <tissue>Mammary gland</tissue>
        <tissue>Placenta</tissue>
        <tissue>Uterus</tissue>
    </source>
</reference>
<reference key="4">
    <citation type="journal article" date="1998" name="J. Biol. Chem.">
        <title>Genetic evidence for the expression of ATP- and GTP-specific succinyl-CoA synthetases in multicellular eucaryotes.</title>
        <authorList>
            <person name="Johnson J.D."/>
            <person name="Mehus J.G."/>
            <person name="Tews K."/>
            <person name="Milavetz B.I."/>
            <person name="Lambeth D.O."/>
        </authorList>
    </citation>
    <scope>NUCLEOTIDE SEQUENCE [MRNA] OF 29-432 (ISOFORM 1)</scope>
    <scope>TISSUE SPECIFICITY</scope>
    <source>
        <tissue>Liver</tissue>
    </source>
</reference>
<reference key="5">
    <citation type="submission" date="1999-02" db="EMBL/GenBank/DDBJ databases">
        <authorList>
            <person name="Mei G."/>
            <person name="Yu W."/>
            <person name="Gibbs R.A."/>
        </authorList>
    </citation>
    <scope>NUCLEOTIDE SEQUENCE [LARGE SCALE MRNA] OF 234-432 (ISOFORM 1)</scope>
    <source>
        <tissue>Brain</tissue>
    </source>
</reference>
<reference key="6">
    <citation type="journal article" date="2009" name="Science">
        <title>Lysine acetylation targets protein complexes and co-regulates major cellular functions.</title>
        <authorList>
            <person name="Choudhary C."/>
            <person name="Kumar C."/>
            <person name="Gnad F."/>
            <person name="Nielsen M.L."/>
            <person name="Rehman M."/>
            <person name="Walther T.C."/>
            <person name="Olsen J.V."/>
            <person name="Mann M."/>
        </authorList>
    </citation>
    <scope>ACETYLATION [LARGE SCALE ANALYSIS] AT LYS-227 AND LYS-291</scope>
    <scope>IDENTIFICATION BY MASS SPECTROMETRY [LARGE SCALE ANALYSIS]</scope>
</reference>
<reference key="7">
    <citation type="journal article" date="2011" name="BMC Syst. Biol.">
        <title>Initial characterization of the human central proteome.</title>
        <authorList>
            <person name="Burkard T.R."/>
            <person name="Planyavsky M."/>
            <person name="Kaupe I."/>
            <person name="Breitwieser F.P."/>
            <person name="Buerckstuemmer T."/>
            <person name="Bennett K.L."/>
            <person name="Superti-Furga G."/>
            <person name="Colinge J."/>
        </authorList>
    </citation>
    <scope>IDENTIFICATION BY MASS SPECTROMETRY [LARGE SCALE ANALYSIS]</scope>
</reference>
<reference key="8">
    <citation type="journal article" date="2014" name="J. Proteomics">
        <title>An enzyme assisted RP-RPLC approach for in-depth analysis of human liver phosphoproteome.</title>
        <authorList>
            <person name="Bian Y."/>
            <person name="Song C."/>
            <person name="Cheng K."/>
            <person name="Dong M."/>
            <person name="Wang F."/>
            <person name="Huang J."/>
            <person name="Sun D."/>
            <person name="Wang L."/>
            <person name="Ye M."/>
            <person name="Zou H."/>
        </authorList>
    </citation>
    <scope>IDENTIFICATION BY MASS SPECTROMETRY [LARGE SCALE ANALYSIS]</scope>
    <source>
        <tissue>Liver</tissue>
    </source>
</reference>
<reference key="9">
    <citation type="journal article" date="2015" name="Proteomics">
        <title>N-terminome analysis of the human mitochondrial proteome.</title>
        <authorList>
            <person name="Vaca Jacome A.S."/>
            <person name="Rabilloud T."/>
            <person name="Schaeffer-Reiss C."/>
            <person name="Rompais M."/>
            <person name="Ayoub D."/>
            <person name="Lane L."/>
            <person name="Bairoch A."/>
            <person name="Van Dorsselaer A."/>
            <person name="Carapito C."/>
        </authorList>
    </citation>
    <scope>CLEAVAGE OF TRANSIT PEPTIDE [LARGE SCALE ANALYSIS] AFTER TRP-37</scope>
    <scope>IDENTIFICATION BY MASS SPECTROMETRY [LARGE SCALE ANALYSIS]</scope>
</reference>
<protein>
    <recommendedName>
        <fullName evidence="2">Succinate--CoA ligase [GDP-forming] subunit beta, mitochondrial</fullName>
        <ecNumber evidence="2">6.2.1.4</ecNumber>
    </recommendedName>
    <alternativeName>
        <fullName evidence="2">GTP-specific succinyl-CoA synthetase subunit beta</fullName>
        <shortName evidence="2">G-SCS</shortName>
        <shortName evidence="2">GTPSCS</shortName>
    </alternativeName>
    <alternativeName>
        <fullName evidence="2">Succinyl-CoA synthetase beta-G chain</fullName>
        <shortName evidence="2">SCS-betaG</shortName>
    </alternativeName>
</protein>
<sequence length="432" mass="46511">MASPVAAQAGKLLRALALRPRFLAAGSQAVQLTSRRWLNLQEYQSKKLMSDNGVRVQRFFVADTANEALEAAKRLNAKEIVLKAQILAGGRGKGVFNSGLKGGVHLTKDPNVVGQLAKQMIGYNLATKQTPKEGVKVNKVMVAEALDISRETYLAILMDRSCNGPVLVGSPQGGVDIEEVAASNPELIFKEQIDIFEGIKDSQAQRMAENLGFVGPLKSQAADQITKLYNLFLKIDATQVEVNPFGETPEGQVVCFDAKINFDDNAEFRQKDIFAMDDKSENEPIENEAAKYDLKYIGLDGNIACFVNGAGLAMATCDIIFLNGGKPANFLDLGGGVKEAQVYQAFKLLTADPKVEAILVNIFGGIVNCAIIANGITKACRELELKVPLVVRLEGTNVQEAQKILNNSGLPITSAIDLEDAAKKAVASVAKK</sequence>